<keyword id="KW-0028">Amino-acid biosynthesis</keyword>
<keyword id="KW-0963">Cytoplasm</keyword>
<keyword id="KW-0368">Histidine biosynthesis</keyword>
<keyword id="KW-0413">Isomerase</keyword>
<accession>B0T799</accession>
<protein>
    <recommendedName>
        <fullName evidence="1">1-(5-phosphoribosyl)-5-[(5-phosphoribosylamino)methylideneamino] imidazole-4-carboxamide isomerase</fullName>
        <ecNumber evidence="1">5.3.1.16</ecNumber>
    </recommendedName>
    <alternativeName>
        <fullName evidence="1">Phosphoribosylformimino-5-aminoimidazole carboxamide ribotide isomerase</fullName>
    </alternativeName>
</protein>
<reference key="1">
    <citation type="submission" date="2008-01" db="EMBL/GenBank/DDBJ databases">
        <title>Complete sequence of chromosome of Caulobacter sp. K31.</title>
        <authorList>
            <consortium name="US DOE Joint Genome Institute"/>
            <person name="Copeland A."/>
            <person name="Lucas S."/>
            <person name="Lapidus A."/>
            <person name="Barry K."/>
            <person name="Glavina del Rio T."/>
            <person name="Dalin E."/>
            <person name="Tice H."/>
            <person name="Pitluck S."/>
            <person name="Bruce D."/>
            <person name="Goodwin L."/>
            <person name="Thompson L.S."/>
            <person name="Brettin T."/>
            <person name="Detter J.C."/>
            <person name="Han C."/>
            <person name="Schmutz J."/>
            <person name="Larimer F."/>
            <person name="Land M."/>
            <person name="Hauser L."/>
            <person name="Kyrpides N."/>
            <person name="Kim E."/>
            <person name="Stephens C."/>
            <person name="Richardson P."/>
        </authorList>
    </citation>
    <scope>NUCLEOTIDE SEQUENCE [LARGE SCALE GENOMIC DNA]</scope>
    <source>
        <strain>K31</strain>
    </source>
</reference>
<evidence type="ECO:0000255" key="1">
    <source>
        <dbReference type="HAMAP-Rule" id="MF_01014"/>
    </source>
</evidence>
<comment type="catalytic activity">
    <reaction evidence="1">
        <text>1-(5-phospho-beta-D-ribosyl)-5-[(5-phospho-beta-D-ribosylamino)methylideneamino]imidazole-4-carboxamide = 5-[(5-phospho-1-deoxy-D-ribulos-1-ylimino)methylamino]-1-(5-phospho-beta-D-ribosyl)imidazole-4-carboxamide</text>
        <dbReference type="Rhea" id="RHEA:15469"/>
        <dbReference type="ChEBI" id="CHEBI:58435"/>
        <dbReference type="ChEBI" id="CHEBI:58525"/>
        <dbReference type="EC" id="5.3.1.16"/>
    </reaction>
</comment>
<comment type="pathway">
    <text evidence="1">Amino-acid biosynthesis; L-histidine biosynthesis; L-histidine from 5-phospho-alpha-D-ribose 1-diphosphate: step 4/9.</text>
</comment>
<comment type="subcellular location">
    <subcellularLocation>
        <location evidence="1">Cytoplasm</location>
    </subcellularLocation>
</comment>
<comment type="similarity">
    <text evidence="1">Belongs to the HisA/HisF family.</text>
</comment>
<sequence>MILYPAIDLKDGQCVRLLHGDMEKATVFNNSPADQAERFVRDGFSWLHVVDLNGAIEGKSVNTAAVQSILESISIPVQLGGGIRTLEGVEAWIEAGVSRVILGTVAVHDPDLVRKAARLWPEQIAVAVDVRDGKVAVDGWTGLSDLDAITLGKRFEDVGVAALIVTDISRDGALTGVNVEGVGELADAVSIPVIASGGVASVADIERLKARPGVEIAGAILGRSLYAGTIRPAEALTIAAA</sequence>
<gene>
    <name evidence="1" type="primary">hisA</name>
    <name type="ordered locus">Caul_5043</name>
</gene>
<dbReference type="EC" id="5.3.1.16" evidence="1"/>
<dbReference type="EMBL" id="CP000927">
    <property type="protein sequence ID" value="ABZ74163.1"/>
    <property type="molecule type" value="Genomic_DNA"/>
</dbReference>
<dbReference type="SMR" id="B0T799"/>
<dbReference type="STRING" id="366602.Caul_5043"/>
<dbReference type="KEGG" id="cak:Caul_5043"/>
<dbReference type="eggNOG" id="COG0106">
    <property type="taxonomic scope" value="Bacteria"/>
</dbReference>
<dbReference type="HOGENOM" id="CLU_048577_1_1_5"/>
<dbReference type="OrthoDB" id="9807749at2"/>
<dbReference type="UniPathway" id="UPA00031">
    <property type="reaction ID" value="UER00009"/>
</dbReference>
<dbReference type="GO" id="GO:0005737">
    <property type="term" value="C:cytoplasm"/>
    <property type="evidence" value="ECO:0007669"/>
    <property type="project" value="UniProtKB-SubCell"/>
</dbReference>
<dbReference type="GO" id="GO:0003949">
    <property type="term" value="F:1-(5-phosphoribosyl)-5-[(5-phosphoribosylamino)methylideneamino]imidazole-4-carboxamide isomerase activity"/>
    <property type="evidence" value="ECO:0007669"/>
    <property type="project" value="UniProtKB-UniRule"/>
</dbReference>
<dbReference type="GO" id="GO:0000105">
    <property type="term" value="P:L-histidine biosynthetic process"/>
    <property type="evidence" value="ECO:0007669"/>
    <property type="project" value="UniProtKB-UniRule"/>
</dbReference>
<dbReference type="GO" id="GO:0000162">
    <property type="term" value="P:L-tryptophan biosynthetic process"/>
    <property type="evidence" value="ECO:0007669"/>
    <property type="project" value="TreeGrafter"/>
</dbReference>
<dbReference type="CDD" id="cd04732">
    <property type="entry name" value="HisA"/>
    <property type="match status" value="1"/>
</dbReference>
<dbReference type="FunFam" id="3.20.20.70:FF:000009">
    <property type="entry name" value="1-(5-phosphoribosyl)-5-[(5-phosphoribosylamino)methylideneamino] imidazole-4-carboxamide isomerase"/>
    <property type="match status" value="1"/>
</dbReference>
<dbReference type="Gene3D" id="3.20.20.70">
    <property type="entry name" value="Aldolase class I"/>
    <property type="match status" value="1"/>
</dbReference>
<dbReference type="HAMAP" id="MF_01014">
    <property type="entry name" value="HisA"/>
    <property type="match status" value="1"/>
</dbReference>
<dbReference type="InterPro" id="IPR013785">
    <property type="entry name" value="Aldolase_TIM"/>
</dbReference>
<dbReference type="InterPro" id="IPR006062">
    <property type="entry name" value="His_biosynth"/>
</dbReference>
<dbReference type="InterPro" id="IPR006063">
    <property type="entry name" value="HisA_bact_arch"/>
</dbReference>
<dbReference type="InterPro" id="IPR044524">
    <property type="entry name" value="Isoase_HisA-like"/>
</dbReference>
<dbReference type="InterPro" id="IPR023016">
    <property type="entry name" value="Isoase_HisA-like_bact"/>
</dbReference>
<dbReference type="InterPro" id="IPR011060">
    <property type="entry name" value="RibuloseP-bd_barrel"/>
</dbReference>
<dbReference type="NCBIfam" id="TIGR00007">
    <property type="entry name" value="1-(5-phosphoribosyl)-5-[(5-phosphoribosylamino)methylideneamino]imidazole-4-carboxamide isomerase"/>
    <property type="match status" value="1"/>
</dbReference>
<dbReference type="PANTHER" id="PTHR43090">
    <property type="entry name" value="1-(5-PHOSPHORIBOSYL)-5-[(5-PHOSPHORIBOSYLAMINO)METHYLIDENEAMINO] IMIDAZOLE-4-CARBOXAMIDE ISOMERASE"/>
    <property type="match status" value="1"/>
</dbReference>
<dbReference type="PANTHER" id="PTHR43090:SF2">
    <property type="entry name" value="1-(5-PHOSPHORIBOSYL)-5-[(5-PHOSPHORIBOSYLAMINO)METHYLIDENEAMINO] IMIDAZOLE-4-CARBOXAMIDE ISOMERASE"/>
    <property type="match status" value="1"/>
</dbReference>
<dbReference type="Pfam" id="PF00977">
    <property type="entry name" value="His_biosynth"/>
    <property type="match status" value="1"/>
</dbReference>
<dbReference type="SUPFAM" id="SSF51366">
    <property type="entry name" value="Ribulose-phoshate binding barrel"/>
    <property type="match status" value="1"/>
</dbReference>
<organism>
    <name type="scientific">Caulobacter sp. (strain K31)</name>
    <dbReference type="NCBI Taxonomy" id="366602"/>
    <lineage>
        <taxon>Bacteria</taxon>
        <taxon>Pseudomonadati</taxon>
        <taxon>Pseudomonadota</taxon>
        <taxon>Alphaproteobacteria</taxon>
        <taxon>Caulobacterales</taxon>
        <taxon>Caulobacteraceae</taxon>
        <taxon>Caulobacter</taxon>
    </lineage>
</organism>
<name>HIS4_CAUSK</name>
<feature type="chain" id="PRO_1000084091" description="1-(5-phosphoribosyl)-5-[(5-phosphoribosylamino)methylideneamino] imidazole-4-carboxamide isomerase">
    <location>
        <begin position="1"/>
        <end position="241"/>
    </location>
</feature>
<feature type="active site" description="Proton acceptor" evidence="1">
    <location>
        <position position="8"/>
    </location>
</feature>
<feature type="active site" description="Proton donor" evidence="1">
    <location>
        <position position="129"/>
    </location>
</feature>
<proteinExistence type="inferred from homology"/>